<proteinExistence type="inferred from homology"/>
<accession>Q2YLE7</accession>
<keyword id="KW-0066">ATP synthesis</keyword>
<keyword id="KW-0997">Cell inner membrane</keyword>
<keyword id="KW-1003">Cell membrane</keyword>
<keyword id="KW-0139">CF(1)</keyword>
<keyword id="KW-0375">Hydrogen ion transport</keyword>
<keyword id="KW-0406">Ion transport</keyword>
<keyword id="KW-0472">Membrane</keyword>
<keyword id="KW-1185">Reference proteome</keyword>
<keyword id="KW-0813">Transport</keyword>
<comment type="function">
    <text evidence="1">Produces ATP from ADP in the presence of a proton gradient across the membrane.</text>
</comment>
<comment type="subunit">
    <text>F-type ATPases have 2 components, CF(1) - the catalytic core - and CF(0) - the membrane proton channel. CF(1) has five subunits: alpha(3), beta(3), gamma(1), delta(1), epsilon(1). CF(0) has three main subunits: a, b and c.</text>
</comment>
<comment type="subcellular location">
    <subcellularLocation>
        <location evidence="1">Cell inner membrane</location>
        <topology evidence="1">Peripheral membrane protein</topology>
    </subcellularLocation>
</comment>
<comment type="similarity">
    <text evidence="1">Belongs to the ATPase epsilon chain family.</text>
</comment>
<sequence length="135" mass="14482">MAQAFQFELVSPERLLLSAQVTEVVIPGSEGYLTALAGHSPLMTTIMPGVVSVKLADGKTDSYVVFGGFADITPQGCTVLAESATHVDDIDPADIQHRIDHARKVLEDASSNEHRTKAEIFLHQLMTLQGAILPA</sequence>
<evidence type="ECO:0000255" key="1">
    <source>
        <dbReference type="HAMAP-Rule" id="MF_00530"/>
    </source>
</evidence>
<protein>
    <recommendedName>
        <fullName evidence="1">ATP synthase epsilon chain</fullName>
    </recommendedName>
    <alternativeName>
        <fullName evidence="1">ATP synthase F1 sector epsilon subunit</fullName>
    </alternativeName>
    <alternativeName>
        <fullName evidence="1">F-ATPase epsilon subunit</fullName>
    </alternativeName>
</protein>
<feature type="chain" id="PRO_0000265790" description="ATP synthase epsilon chain">
    <location>
        <begin position="1"/>
        <end position="135"/>
    </location>
</feature>
<name>ATPE_BRUA2</name>
<dbReference type="EMBL" id="AM040264">
    <property type="protein sequence ID" value="CAJ11762.1"/>
    <property type="molecule type" value="Genomic_DNA"/>
</dbReference>
<dbReference type="RefSeq" id="WP_002964875.1">
    <property type="nucleotide sequence ID" value="NZ_KN046823.1"/>
</dbReference>
<dbReference type="SMR" id="Q2YLE7"/>
<dbReference type="STRING" id="359391.BAB1_1806"/>
<dbReference type="KEGG" id="bmf:BAB1_1806"/>
<dbReference type="PATRIC" id="fig|359391.11.peg.316"/>
<dbReference type="HOGENOM" id="CLU_084338_2_1_5"/>
<dbReference type="Proteomes" id="UP000002719">
    <property type="component" value="Chromosome I"/>
</dbReference>
<dbReference type="GO" id="GO:0005886">
    <property type="term" value="C:plasma membrane"/>
    <property type="evidence" value="ECO:0007669"/>
    <property type="project" value="UniProtKB-SubCell"/>
</dbReference>
<dbReference type="GO" id="GO:0045259">
    <property type="term" value="C:proton-transporting ATP synthase complex"/>
    <property type="evidence" value="ECO:0007669"/>
    <property type="project" value="UniProtKB-KW"/>
</dbReference>
<dbReference type="GO" id="GO:0005524">
    <property type="term" value="F:ATP binding"/>
    <property type="evidence" value="ECO:0007669"/>
    <property type="project" value="UniProtKB-UniRule"/>
</dbReference>
<dbReference type="GO" id="GO:0046933">
    <property type="term" value="F:proton-transporting ATP synthase activity, rotational mechanism"/>
    <property type="evidence" value="ECO:0007669"/>
    <property type="project" value="UniProtKB-UniRule"/>
</dbReference>
<dbReference type="CDD" id="cd12152">
    <property type="entry name" value="F1-ATPase_delta"/>
    <property type="match status" value="1"/>
</dbReference>
<dbReference type="Gene3D" id="2.60.15.10">
    <property type="entry name" value="F0F1 ATP synthase delta/epsilon subunit, N-terminal"/>
    <property type="match status" value="1"/>
</dbReference>
<dbReference type="HAMAP" id="MF_00530">
    <property type="entry name" value="ATP_synth_epsil_bac"/>
    <property type="match status" value="1"/>
</dbReference>
<dbReference type="InterPro" id="IPR001469">
    <property type="entry name" value="ATP_synth_F1_dsu/esu"/>
</dbReference>
<dbReference type="InterPro" id="IPR020546">
    <property type="entry name" value="ATP_synth_F1_dsu/esu_N"/>
</dbReference>
<dbReference type="InterPro" id="IPR036771">
    <property type="entry name" value="ATPsynth_dsu/esu_N"/>
</dbReference>
<dbReference type="NCBIfam" id="TIGR01216">
    <property type="entry name" value="ATP_synt_epsi"/>
    <property type="match status" value="1"/>
</dbReference>
<dbReference type="NCBIfam" id="NF001851">
    <property type="entry name" value="PRK00571.2-4"/>
    <property type="match status" value="1"/>
</dbReference>
<dbReference type="PANTHER" id="PTHR13822">
    <property type="entry name" value="ATP SYNTHASE DELTA/EPSILON CHAIN"/>
    <property type="match status" value="1"/>
</dbReference>
<dbReference type="PANTHER" id="PTHR13822:SF10">
    <property type="entry name" value="ATP SYNTHASE EPSILON CHAIN, CHLOROPLASTIC"/>
    <property type="match status" value="1"/>
</dbReference>
<dbReference type="Pfam" id="PF02823">
    <property type="entry name" value="ATP-synt_DE_N"/>
    <property type="match status" value="1"/>
</dbReference>
<dbReference type="SUPFAM" id="SSF51344">
    <property type="entry name" value="Epsilon subunit of F1F0-ATP synthase N-terminal domain"/>
    <property type="match status" value="1"/>
</dbReference>
<reference key="1">
    <citation type="journal article" date="2005" name="Infect. Immun.">
        <title>Whole-genome analyses of speciation events in pathogenic Brucellae.</title>
        <authorList>
            <person name="Chain P.S."/>
            <person name="Comerci D.J."/>
            <person name="Tolmasky M.E."/>
            <person name="Larimer F.W."/>
            <person name="Malfatti S.A."/>
            <person name="Vergez L.M."/>
            <person name="Aguero F."/>
            <person name="Land M.L."/>
            <person name="Ugalde R.A."/>
            <person name="Garcia E."/>
        </authorList>
    </citation>
    <scope>NUCLEOTIDE SEQUENCE [LARGE SCALE GENOMIC DNA]</scope>
    <source>
        <strain>2308</strain>
    </source>
</reference>
<organism>
    <name type="scientific">Brucella abortus (strain 2308)</name>
    <dbReference type="NCBI Taxonomy" id="359391"/>
    <lineage>
        <taxon>Bacteria</taxon>
        <taxon>Pseudomonadati</taxon>
        <taxon>Pseudomonadota</taxon>
        <taxon>Alphaproteobacteria</taxon>
        <taxon>Hyphomicrobiales</taxon>
        <taxon>Brucellaceae</taxon>
        <taxon>Brucella/Ochrobactrum group</taxon>
        <taxon>Brucella</taxon>
    </lineage>
</organism>
<gene>
    <name evidence="1" type="primary">atpC</name>
    <name type="ordered locus">BAB1_1806</name>
</gene>